<keyword id="KW-0963">Cytoplasm</keyword>
<keyword id="KW-0489">Methyltransferase</keyword>
<keyword id="KW-1185">Reference proteome</keyword>
<keyword id="KW-0694">RNA-binding</keyword>
<keyword id="KW-0698">rRNA processing</keyword>
<keyword id="KW-0949">S-adenosyl-L-methionine</keyword>
<keyword id="KW-0808">Transferase</keyword>
<reference key="1">
    <citation type="submission" date="2007-08" db="EMBL/GenBank/DDBJ databases">
        <authorList>
            <consortium name="The Citrobacter koseri Genome Sequencing Project"/>
            <person name="McClelland M."/>
            <person name="Sanderson E.K."/>
            <person name="Porwollik S."/>
            <person name="Spieth J."/>
            <person name="Clifton W.S."/>
            <person name="Latreille P."/>
            <person name="Courtney L."/>
            <person name="Wang C."/>
            <person name="Pepin K."/>
            <person name="Bhonagiri V."/>
            <person name="Nash W."/>
            <person name="Johnson M."/>
            <person name="Thiruvilangam P."/>
            <person name="Wilson R."/>
        </authorList>
    </citation>
    <scope>NUCLEOTIDE SEQUENCE [LARGE SCALE GENOMIC DNA]</scope>
    <source>
        <strain>ATCC BAA-895 / CDC 4225-83 / SGSC4696</strain>
    </source>
</reference>
<protein>
    <recommendedName>
        <fullName evidence="1">Ribosomal RNA small subunit methyltransferase F</fullName>
        <ecNumber evidence="1">2.1.1.178</ecNumber>
    </recommendedName>
    <alternativeName>
        <fullName evidence="1">16S rRNA m5C1407 methyltransferase</fullName>
    </alternativeName>
    <alternativeName>
        <fullName evidence="1">rRNA (cytosine-C(5)-)-methyltransferase RsmF</fullName>
    </alternativeName>
</protein>
<dbReference type="EC" id="2.1.1.178" evidence="1"/>
<dbReference type="EMBL" id="CP000822">
    <property type="protein sequence ID" value="ABV12279.1"/>
    <property type="molecule type" value="Genomic_DNA"/>
</dbReference>
<dbReference type="RefSeq" id="WP_012132033.1">
    <property type="nucleotide sequence ID" value="NC_009792.1"/>
</dbReference>
<dbReference type="SMR" id="A8AFL6"/>
<dbReference type="STRING" id="290338.CKO_01138"/>
<dbReference type="GeneID" id="45135276"/>
<dbReference type="KEGG" id="cko:CKO_01138"/>
<dbReference type="HOGENOM" id="CLU_005316_6_2_6"/>
<dbReference type="OrthoDB" id="9810297at2"/>
<dbReference type="Proteomes" id="UP000008148">
    <property type="component" value="Chromosome"/>
</dbReference>
<dbReference type="GO" id="GO:0005737">
    <property type="term" value="C:cytoplasm"/>
    <property type="evidence" value="ECO:0007669"/>
    <property type="project" value="UniProtKB-SubCell"/>
</dbReference>
<dbReference type="GO" id="GO:0003723">
    <property type="term" value="F:RNA binding"/>
    <property type="evidence" value="ECO:0007669"/>
    <property type="project" value="UniProtKB-KW"/>
</dbReference>
<dbReference type="GO" id="GO:0009383">
    <property type="term" value="F:rRNA (cytosine-C5-)-methyltransferase activity"/>
    <property type="evidence" value="ECO:0007669"/>
    <property type="project" value="TreeGrafter"/>
</dbReference>
<dbReference type="GO" id="GO:0070475">
    <property type="term" value="P:rRNA base methylation"/>
    <property type="evidence" value="ECO:0007669"/>
    <property type="project" value="TreeGrafter"/>
</dbReference>
<dbReference type="CDD" id="cd02440">
    <property type="entry name" value="AdoMet_MTases"/>
    <property type="match status" value="1"/>
</dbReference>
<dbReference type="FunFam" id="3.10.450.720:FF:000001">
    <property type="entry name" value="Ribosomal RNA small subunit methyltransferase F"/>
    <property type="match status" value="1"/>
</dbReference>
<dbReference type="FunFam" id="3.40.50.150:FF:000079">
    <property type="entry name" value="Ribosomal RNA small subunit methyltransferase F"/>
    <property type="match status" value="1"/>
</dbReference>
<dbReference type="Gene3D" id="3.10.450.720">
    <property type="match status" value="1"/>
</dbReference>
<dbReference type="Gene3D" id="3.40.50.150">
    <property type="entry name" value="Vaccinia Virus protein VP39"/>
    <property type="match status" value="1"/>
</dbReference>
<dbReference type="HAMAP" id="MF_01579">
    <property type="entry name" value="16SrRNA_methyltr_F"/>
    <property type="match status" value="1"/>
</dbReference>
<dbReference type="InterPro" id="IPR031341">
    <property type="entry name" value="Methyltr_RsmF_N"/>
</dbReference>
<dbReference type="InterPro" id="IPR049560">
    <property type="entry name" value="MeTrfase_RsmB-F_NOP2_cat"/>
</dbReference>
<dbReference type="InterPro" id="IPR001678">
    <property type="entry name" value="MeTrfase_RsmB-F_NOP2_dom"/>
</dbReference>
<dbReference type="InterPro" id="IPR027391">
    <property type="entry name" value="Nol1_Nop2_Fmu_2"/>
</dbReference>
<dbReference type="InterPro" id="IPR011023">
    <property type="entry name" value="Nop2p"/>
</dbReference>
<dbReference type="InterPro" id="IPR023267">
    <property type="entry name" value="RCMT"/>
</dbReference>
<dbReference type="InterPro" id="IPR023545">
    <property type="entry name" value="rRNA_ssu_MeTfrase_F"/>
</dbReference>
<dbReference type="InterPro" id="IPR018314">
    <property type="entry name" value="RsmB/NOL1/NOP2-like_CS"/>
</dbReference>
<dbReference type="InterPro" id="IPR029063">
    <property type="entry name" value="SAM-dependent_MTases_sf"/>
</dbReference>
<dbReference type="InterPro" id="IPR048457">
    <property type="entry name" value="YebU_pre-PUA_dom"/>
</dbReference>
<dbReference type="NCBIfam" id="TIGR00446">
    <property type="entry name" value="nop2p"/>
    <property type="match status" value="1"/>
</dbReference>
<dbReference type="NCBIfam" id="NF008898">
    <property type="entry name" value="PRK11933.1"/>
    <property type="match status" value="1"/>
</dbReference>
<dbReference type="PANTHER" id="PTHR22807:SF30">
    <property type="entry name" value="28S RRNA (CYTOSINE(4447)-C(5))-METHYLTRANSFERASE-RELATED"/>
    <property type="match status" value="1"/>
</dbReference>
<dbReference type="PANTHER" id="PTHR22807">
    <property type="entry name" value="NOP2 YEAST -RELATED NOL1/NOP2/FMU SUN DOMAIN-CONTAINING"/>
    <property type="match status" value="1"/>
</dbReference>
<dbReference type="Pfam" id="PF01189">
    <property type="entry name" value="Methyltr_RsmB-F"/>
    <property type="match status" value="1"/>
</dbReference>
<dbReference type="Pfam" id="PF17125">
    <property type="entry name" value="Methyltr_RsmF_N"/>
    <property type="match status" value="1"/>
</dbReference>
<dbReference type="Pfam" id="PF13636">
    <property type="entry name" value="Methyltranf_PUA"/>
    <property type="match status" value="1"/>
</dbReference>
<dbReference type="Pfam" id="PF21150">
    <property type="entry name" value="YebU_pre-PUA_dom"/>
    <property type="match status" value="1"/>
</dbReference>
<dbReference type="PRINTS" id="PR02008">
    <property type="entry name" value="RCMTFAMILY"/>
</dbReference>
<dbReference type="SUPFAM" id="SSF53335">
    <property type="entry name" value="S-adenosyl-L-methionine-dependent methyltransferases"/>
    <property type="match status" value="1"/>
</dbReference>
<dbReference type="PROSITE" id="PS01153">
    <property type="entry name" value="NOL1_NOP2_SUN"/>
    <property type="match status" value="1"/>
</dbReference>
<dbReference type="PROSITE" id="PS51686">
    <property type="entry name" value="SAM_MT_RSMB_NOP"/>
    <property type="match status" value="1"/>
</dbReference>
<sequence length="479" mass="53143">MAQHAVYFPDAFLTQMREAMPSTLSFDDFLAACQRPLRRSIRVNTLKISVTDFLALTAPYGWSLTPVPWCEEGFWIERDDEESLPLGSTAEHLSGLFYIQEASSMLPVAALFAEGNTPERIMDVAAAPGSKTTQIAARMNNQGAILANEFSASRVKVLHANISRCGISNVALTHFDGRVFGAALPETFDAILLDAPCSGEGVVRKDPDALKNWSVESNLDIAATQRELIDSAFHALRPGGTLVYSTCTLNREENESVCLWLKETYPEAVEFLPLGDLFPGAERALTAEGFLHVFPQIYDCEGFFVARLRKTAAIPPLPAPGYKVGKFPFAPMKGREATQITQAANASGLQWGENLHLWQRDKEVWLFPAEIEALIGKVRFSRLGIKLAESHNKGYRWQHEAVIALADPHHANAFELSHQEAEEWYRGRDVYPQTAPSADDVLVTFQHQPIGLAKRIGSRLKNSYPRELVRDGKLFTGND</sequence>
<accession>A8AFL6</accession>
<comment type="function">
    <text evidence="1">Specifically methylates the cytosine at position 1407 (m5C1407) of 16S rRNA.</text>
</comment>
<comment type="catalytic activity">
    <reaction evidence="1">
        <text>cytidine(1407) in 16S rRNA + S-adenosyl-L-methionine = 5-methylcytidine(1407) in 16S rRNA + S-adenosyl-L-homocysteine + H(+)</text>
        <dbReference type="Rhea" id="RHEA:42756"/>
        <dbReference type="Rhea" id="RHEA-COMP:10223"/>
        <dbReference type="Rhea" id="RHEA-COMP:10224"/>
        <dbReference type="ChEBI" id="CHEBI:15378"/>
        <dbReference type="ChEBI" id="CHEBI:57856"/>
        <dbReference type="ChEBI" id="CHEBI:59789"/>
        <dbReference type="ChEBI" id="CHEBI:74483"/>
        <dbReference type="ChEBI" id="CHEBI:82748"/>
        <dbReference type="EC" id="2.1.1.178"/>
    </reaction>
</comment>
<comment type="subcellular location">
    <subcellularLocation>
        <location evidence="1">Cytoplasm</location>
    </subcellularLocation>
</comment>
<comment type="similarity">
    <text evidence="1">Belongs to the class I-like SAM-binding methyltransferase superfamily. RsmB/NOP family.</text>
</comment>
<name>RSMF_CITK8</name>
<organism>
    <name type="scientific">Citrobacter koseri (strain ATCC BAA-895 / CDC 4225-83 / SGSC4696)</name>
    <dbReference type="NCBI Taxonomy" id="290338"/>
    <lineage>
        <taxon>Bacteria</taxon>
        <taxon>Pseudomonadati</taxon>
        <taxon>Pseudomonadota</taxon>
        <taxon>Gammaproteobacteria</taxon>
        <taxon>Enterobacterales</taxon>
        <taxon>Enterobacteriaceae</taxon>
        <taxon>Citrobacter</taxon>
    </lineage>
</organism>
<gene>
    <name evidence="1" type="primary">rsmF</name>
    <name type="ordered locus">CKO_01138</name>
</gene>
<proteinExistence type="inferred from homology"/>
<feature type="chain" id="PRO_1000069271" description="Ribosomal RNA small subunit methyltransferase F">
    <location>
        <begin position="1"/>
        <end position="479"/>
    </location>
</feature>
<feature type="active site" description="Nucleophile" evidence="1">
    <location>
        <position position="247"/>
    </location>
</feature>
<feature type="binding site" evidence="1">
    <location>
        <begin position="125"/>
        <end position="131"/>
    </location>
    <ligand>
        <name>S-adenosyl-L-methionine</name>
        <dbReference type="ChEBI" id="CHEBI:59789"/>
    </ligand>
</feature>
<feature type="binding site" evidence="1">
    <location>
        <position position="149"/>
    </location>
    <ligand>
        <name>S-adenosyl-L-methionine</name>
        <dbReference type="ChEBI" id="CHEBI:59789"/>
    </ligand>
</feature>
<feature type="binding site" evidence="1">
    <location>
        <position position="176"/>
    </location>
    <ligand>
        <name>S-adenosyl-L-methionine</name>
        <dbReference type="ChEBI" id="CHEBI:59789"/>
    </ligand>
</feature>
<feature type="binding site" evidence="1">
    <location>
        <position position="194"/>
    </location>
    <ligand>
        <name>S-adenosyl-L-methionine</name>
        <dbReference type="ChEBI" id="CHEBI:59789"/>
    </ligand>
</feature>
<evidence type="ECO:0000255" key="1">
    <source>
        <dbReference type="HAMAP-Rule" id="MF_01579"/>
    </source>
</evidence>